<comment type="function">
    <text evidence="1">Required for accurate and efficient protein synthesis under certain stress conditions. May act as a fidelity factor of the translation reaction, by catalyzing a one-codon backward translocation of tRNAs on improperly translocated ribosomes. Back-translocation proceeds from a post-translocation (POST) complex to a pre-translocation (PRE) complex, thus giving elongation factor G a second chance to translocate the tRNAs correctly. Binds to ribosomes in a GTP-dependent manner.</text>
</comment>
<comment type="catalytic activity">
    <reaction evidence="1">
        <text>GTP + H2O = GDP + phosphate + H(+)</text>
        <dbReference type="Rhea" id="RHEA:19669"/>
        <dbReference type="ChEBI" id="CHEBI:15377"/>
        <dbReference type="ChEBI" id="CHEBI:15378"/>
        <dbReference type="ChEBI" id="CHEBI:37565"/>
        <dbReference type="ChEBI" id="CHEBI:43474"/>
        <dbReference type="ChEBI" id="CHEBI:58189"/>
        <dbReference type="EC" id="3.6.5.n1"/>
    </reaction>
</comment>
<comment type="subcellular location">
    <subcellularLocation>
        <location evidence="1">Cell inner membrane</location>
        <topology evidence="1">Peripheral membrane protein</topology>
        <orientation evidence="1">Cytoplasmic side</orientation>
    </subcellularLocation>
</comment>
<comment type="similarity">
    <text evidence="1">Belongs to the TRAFAC class translation factor GTPase superfamily. Classic translation factor GTPase family. LepA subfamily.</text>
</comment>
<reference key="1">
    <citation type="journal article" date="2004" name="Proc. Natl. Acad. Sci. U.S.A.">
        <title>Structural flexibility in the Burkholderia mallei genome.</title>
        <authorList>
            <person name="Nierman W.C."/>
            <person name="DeShazer D."/>
            <person name="Kim H.S."/>
            <person name="Tettelin H."/>
            <person name="Nelson K.E."/>
            <person name="Feldblyum T.V."/>
            <person name="Ulrich R.L."/>
            <person name="Ronning C.M."/>
            <person name="Brinkac L.M."/>
            <person name="Daugherty S.C."/>
            <person name="Davidsen T.D."/>
            <person name="DeBoy R.T."/>
            <person name="Dimitrov G."/>
            <person name="Dodson R.J."/>
            <person name="Durkin A.S."/>
            <person name="Gwinn M.L."/>
            <person name="Haft D.H."/>
            <person name="Khouri H.M."/>
            <person name="Kolonay J.F."/>
            <person name="Madupu R."/>
            <person name="Mohammoud Y."/>
            <person name="Nelson W.C."/>
            <person name="Radune D."/>
            <person name="Romero C.M."/>
            <person name="Sarria S."/>
            <person name="Selengut J."/>
            <person name="Shamblin C."/>
            <person name="Sullivan S.A."/>
            <person name="White O."/>
            <person name="Yu Y."/>
            <person name="Zafar N."/>
            <person name="Zhou L."/>
            <person name="Fraser C.M."/>
        </authorList>
    </citation>
    <scope>NUCLEOTIDE SEQUENCE [LARGE SCALE GENOMIC DNA]</scope>
    <source>
        <strain>ATCC 23344</strain>
    </source>
</reference>
<organism>
    <name type="scientific">Burkholderia mallei (strain ATCC 23344)</name>
    <dbReference type="NCBI Taxonomy" id="243160"/>
    <lineage>
        <taxon>Bacteria</taxon>
        <taxon>Pseudomonadati</taxon>
        <taxon>Pseudomonadota</taxon>
        <taxon>Betaproteobacteria</taxon>
        <taxon>Burkholderiales</taxon>
        <taxon>Burkholderiaceae</taxon>
        <taxon>Burkholderia</taxon>
        <taxon>pseudomallei group</taxon>
    </lineage>
</organism>
<protein>
    <recommendedName>
        <fullName evidence="1">Elongation factor 4</fullName>
        <shortName evidence="1">EF-4</shortName>
        <ecNumber evidence="1">3.6.5.n1</ecNumber>
    </recommendedName>
    <alternativeName>
        <fullName evidence="1">Ribosomal back-translocase LepA</fullName>
    </alternativeName>
</protein>
<accession>Q62LT1</accession>
<dbReference type="EC" id="3.6.5.n1" evidence="1"/>
<dbReference type="EMBL" id="CP000010">
    <property type="protein sequence ID" value="AAU49375.1"/>
    <property type="molecule type" value="Genomic_DNA"/>
</dbReference>
<dbReference type="RefSeq" id="WP_004193305.1">
    <property type="nucleotide sequence ID" value="NC_006348.1"/>
</dbReference>
<dbReference type="RefSeq" id="YP_102337.1">
    <property type="nucleotide sequence ID" value="NC_006348.1"/>
</dbReference>
<dbReference type="SMR" id="Q62LT1"/>
<dbReference type="GeneID" id="93061011"/>
<dbReference type="KEGG" id="bma:BMA0541"/>
<dbReference type="PATRIC" id="fig|243160.12.peg.555"/>
<dbReference type="eggNOG" id="COG0481">
    <property type="taxonomic scope" value="Bacteria"/>
</dbReference>
<dbReference type="HOGENOM" id="CLU_009995_3_3_4"/>
<dbReference type="Proteomes" id="UP000006693">
    <property type="component" value="Chromosome 1"/>
</dbReference>
<dbReference type="GO" id="GO:0005886">
    <property type="term" value="C:plasma membrane"/>
    <property type="evidence" value="ECO:0007669"/>
    <property type="project" value="UniProtKB-SubCell"/>
</dbReference>
<dbReference type="GO" id="GO:0005525">
    <property type="term" value="F:GTP binding"/>
    <property type="evidence" value="ECO:0007669"/>
    <property type="project" value="UniProtKB-UniRule"/>
</dbReference>
<dbReference type="GO" id="GO:0003924">
    <property type="term" value="F:GTPase activity"/>
    <property type="evidence" value="ECO:0007669"/>
    <property type="project" value="UniProtKB-UniRule"/>
</dbReference>
<dbReference type="GO" id="GO:0097216">
    <property type="term" value="F:guanosine tetraphosphate binding"/>
    <property type="evidence" value="ECO:0007669"/>
    <property type="project" value="UniProtKB-ARBA"/>
</dbReference>
<dbReference type="GO" id="GO:0043022">
    <property type="term" value="F:ribosome binding"/>
    <property type="evidence" value="ECO:0007669"/>
    <property type="project" value="UniProtKB-UniRule"/>
</dbReference>
<dbReference type="GO" id="GO:0003746">
    <property type="term" value="F:translation elongation factor activity"/>
    <property type="evidence" value="ECO:0007669"/>
    <property type="project" value="UniProtKB-UniRule"/>
</dbReference>
<dbReference type="GO" id="GO:0045727">
    <property type="term" value="P:positive regulation of translation"/>
    <property type="evidence" value="ECO:0007669"/>
    <property type="project" value="UniProtKB-UniRule"/>
</dbReference>
<dbReference type="CDD" id="cd03699">
    <property type="entry name" value="EF4_II"/>
    <property type="match status" value="1"/>
</dbReference>
<dbReference type="CDD" id="cd16260">
    <property type="entry name" value="EF4_III"/>
    <property type="match status" value="1"/>
</dbReference>
<dbReference type="CDD" id="cd01890">
    <property type="entry name" value="LepA"/>
    <property type="match status" value="1"/>
</dbReference>
<dbReference type="CDD" id="cd03709">
    <property type="entry name" value="lepA_C"/>
    <property type="match status" value="1"/>
</dbReference>
<dbReference type="FunFam" id="3.40.50.300:FF:000078">
    <property type="entry name" value="Elongation factor 4"/>
    <property type="match status" value="1"/>
</dbReference>
<dbReference type="FunFam" id="2.40.30.10:FF:000015">
    <property type="entry name" value="Translation factor GUF1, mitochondrial"/>
    <property type="match status" value="1"/>
</dbReference>
<dbReference type="FunFam" id="3.30.70.240:FF:000007">
    <property type="entry name" value="Translation factor GUF1, mitochondrial"/>
    <property type="match status" value="1"/>
</dbReference>
<dbReference type="FunFam" id="3.30.70.2570:FF:000001">
    <property type="entry name" value="Translation factor GUF1, mitochondrial"/>
    <property type="match status" value="1"/>
</dbReference>
<dbReference type="FunFam" id="3.30.70.870:FF:000004">
    <property type="entry name" value="Translation factor GUF1, mitochondrial"/>
    <property type="match status" value="1"/>
</dbReference>
<dbReference type="Gene3D" id="3.30.70.240">
    <property type="match status" value="1"/>
</dbReference>
<dbReference type="Gene3D" id="3.30.70.2570">
    <property type="entry name" value="Elongation factor 4, C-terminal domain"/>
    <property type="match status" value="1"/>
</dbReference>
<dbReference type="Gene3D" id="3.30.70.870">
    <property type="entry name" value="Elongation Factor G (Translational Gtpase), domain 3"/>
    <property type="match status" value="1"/>
</dbReference>
<dbReference type="Gene3D" id="3.40.50.300">
    <property type="entry name" value="P-loop containing nucleotide triphosphate hydrolases"/>
    <property type="match status" value="1"/>
</dbReference>
<dbReference type="Gene3D" id="2.40.30.10">
    <property type="entry name" value="Translation factors"/>
    <property type="match status" value="1"/>
</dbReference>
<dbReference type="HAMAP" id="MF_00071">
    <property type="entry name" value="LepA"/>
    <property type="match status" value="1"/>
</dbReference>
<dbReference type="InterPro" id="IPR006297">
    <property type="entry name" value="EF-4"/>
</dbReference>
<dbReference type="InterPro" id="IPR035647">
    <property type="entry name" value="EFG_III/V"/>
</dbReference>
<dbReference type="InterPro" id="IPR000640">
    <property type="entry name" value="EFG_V-like"/>
</dbReference>
<dbReference type="InterPro" id="IPR004161">
    <property type="entry name" value="EFTu-like_2"/>
</dbReference>
<dbReference type="InterPro" id="IPR031157">
    <property type="entry name" value="G_TR_CS"/>
</dbReference>
<dbReference type="InterPro" id="IPR038363">
    <property type="entry name" value="LepA_C_sf"/>
</dbReference>
<dbReference type="InterPro" id="IPR013842">
    <property type="entry name" value="LepA_CTD"/>
</dbReference>
<dbReference type="InterPro" id="IPR035654">
    <property type="entry name" value="LepA_IV"/>
</dbReference>
<dbReference type="InterPro" id="IPR027417">
    <property type="entry name" value="P-loop_NTPase"/>
</dbReference>
<dbReference type="InterPro" id="IPR005225">
    <property type="entry name" value="Small_GTP-bd"/>
</dbReference>
<dbReference type="InterPro" id="IPR000795">
    <property type="entry name" value="T_Tr_GTP-bd_dom"/>
</dbReference>
<dbReference type="InterPro" id="IPR009000">
    <property type="entry name" value="Transl_B-barrel_sf"/>
</dbReference>
<dbReference type="NCBIfam" id="TIGR01393">
    <property type="entry name" value="lepA"/>
    <property type="match status" value="1"/>
</dbReference>
<dbReference type="NCBIfam" id="TIGR00231">
    <property type="entry name" value="small_GTP"/>
    <property type="match status" value="1"/>
</dbReference>
<dbReference type="PANTHER" id="PTHR43512:SF4">
    <property type="entry name" value="TRANSLATION FACTOR GUF1 HOMOLOG, CHLOROPLASTIC"/>
    <property type="match status" value="1"/>
</dbReference>
<dbReference type="PANTHER" id="PTHR43512">
    <property type="entry name" value="TRANSLATION FACTOR GUF1-RELATED"/>
    <property type="match status" value="1"/>
</dbReference>
<dbReference type="Pfam" id="PF00679">
    <property type="entry name" value="EFG_C"/>
    <property type="match status" value="1"/>
</dbReference>
<dbReference type="Pfam" id="PF00009">
    <property type="entry name" value="GTP_EFTU"/>
    <property type="match status" value="1"/>
</dbReference>
<dbReference type="Pfam" id="PF03144">
    <property type="entry name" value="GTP_EFTU_D2"/>
    <property type="match status" value="1"/>
</dbReference>
<dbReference type="Pfam" id="PF06421">
    <property type="entry name" value="LepA_C"/>
    <property type="match status" value="1"/>
</dbReference>
<dbReference type="PRINTS" id="PR00315">
    <property type="entry name" value="ELONGATNFCT"/>
</dbReference>
<dbReference type="SMART" id="SM00838">
    <property type="entry name" value="EFG_C"/>
    <property type="match status" value="1"/>
</dbReference>
<dbReference type="SUPFAM" id="SSF54980">
    <property type="entry name" value="EF-G C-terminal domain-like"/>
    <property type="match status" value="2"/>
</dbReference>
<dbReference type="SUPFAM" id="SSF52540">
    <property type="entry name" value="P-loop containing nucleoside triphosphate hydrolases"/>
    <property type="match status" value="1"/>
</dbReference>
<dbReference type="SUPFAM" id="SSF50447">
    <property type="entry name" value="Translation proteins"/>
    <property type="match status" value="1"/>
</dbReference>
<dbReference type="PROSITE" id="PS00301">
    <property type="entry name" value="G_TR_1"/>
    <property type="match status" value="1"/>
</dbReference>
<dbReference type="PROSITE" id="PS51722">
    <property type="entry name" value="G_TR_2"/>
    <property type="match status" value="1"/>
</dbReference>
<proteinExistence type="inferred from homology"/>
<name>LEPA_BURMA</name>
<evidence type="ECO:0000255" key="1">
    <source>
        <dbReference type="HAMAP-Rule" id="MF_00071"/>
    </source>
</evidence>
<keyword id="KW-0997">Cell inner membrane</keyword>
<keyword id="KW-1003">Cell membrane</keyword>
<keyword id="KW-0342">GTP-binding</keyword>
<keyword id="KW-0378">Hydrolase</keyword>
<keyword id="KW-0472">Membrane</keyword>
<keyword id="KW-0547">Nucleotide-binding</keyword>
<keyword id="KW-0648">Protein biosynthesis</keyword>
<keyword id="KW-1185">Reference proteome</keyword>
<feature type="chain" id="PRO_0000176249" description="Elongation factor 4">
    <location>
        <begin position="1"/>
        <end position="597"/>
    </location>
</feature>
<feature type="domain" description="tr-type G">
    <location>
        <begin position="2"/>
        <end position="184"/>
    </location>
</feature>
<feature type="binding site" evidence="1">
    <location>
        <begin position="14"/>
        <end position="19"/>
    </location>
    <ligand>
        <name>GTP</name>
        <dbReference type="ChEBI" id="CHEBI:37565"/>
    </ligand>
</feature>
<feature type="binding site" evidence="1">
    <location>
        <begin position="131"/>
        <end position="134"/>
    </location>
    <ligand>
        <name>GTP</name>
        <dbReference type="ChEBI" id="CHEBI:37565"/>
    </ligand>
</feature>
<gene>
    <name evidence="1" type="primary">lepA</name>
    <name type="ordered locus">BMA0541</name>
</gene>
<sequence>MDHIRNFSIIAHIDHGKSTLADRIIQLCGGLSDREMESQVLDSMDLERERGITIKAQTAALTYRARDGKVYNLNLIDTPGHVDFSYEVSRSLSACEGALLVVDASQGVEAQTVANCYTAIELGVEVVPVLNKIDLPAANPENAIAEIEDVIGIDAMDAVRCSAKTGLGVEDVLESLIAKVPPPKGDPDAPLQALIIDSWFDNYVGVVMLVRIVNGTLRPKERIKLMATDAQYAVEHVGVFTPKSRNLESLSAGQVGFIISGIKELTAAKVGDTVTHATKPAPEPLPGFKEVKPQVFAGLYPVEANQYDALRESLEKLKLNDASLQYEPEVSQALGFGFRCGFLGLLHMEIVQERLEREFDMDLITTAPTVVYEVVQSDGTTIMVENPAKMPEPARIAEIREPIVTVNLYMPQDYVGSVITLCEQKRGTQINMQYHGRQVQLTYEIPMAEIVLDFFDRLKSVSRGYASMDYEFKEYRTSDVVKVDMLINGDKVDALSIIVHRSQSQYRGREVAAKMREIIPRQMYDVAIQAAIGAHIIARENIKALRKNVLAKCYGGDITRKKKLLEKQKEGKKRMKQVGSVEIPQEAFLAILRVEDK</sequence>